<name>Y1370_METJA</name>
<keyword id="KW-1185">Reference proteome</keyword>
<protein>
    <recommendedName>
        <fullName evidence="1">UPF0285 protein MJ1370</fullName>
    </recommendedName>
</protein>
<gene>
    <name type="ordered locus">MJ1370</name>
</gene>
<organism>
    <name type="scientific">Methanocaldococcus jannaschii (strain ATCC 43067 / DSM 2661 / JAL-1 / JCM 10045 / NBRC 100440)</name>
    <name type="common">Methanococcus jannaschii</name>
    <dbReference type="NCBI Taxonomy" id="243232"/>
    <lineage>
        <taxon>Archaea</taxon>
        <taxon>Methanobacteriati</taxon>
        <taxon>Methanobacteriota</taxon>
        <taxon>Methanomada group</taxon>
        <taxon>Methanococci</taxon>
        <taxon>Methanococcales</taxon>
        <taxon>Methanocaldococcaceae</taxon>
        <taxon>Methanocaldococcus</taxon>
    </lineage>
</organism>
<comment type="similarity">
    <text evidence="1">Belongs to the UPF0285 family.</text>
</comment>
<sequence>MITVGIDHGTSGITTCIKDNDKKIIFKLKRTELKEKSYLEELEKHISLEDIDLIALTYSMGDGINKILPIEKVKNRGVLSIEGAGEKVGGGTKVYDEIKESGLPAVVIPGLHRGIECLDERFRALYSHIASPEKVSIAYYAYKLFGFNDFVLSDISSNTVTLLIKDGKIFGGFDACIGAIGMLHGPIDLEMIRDIDAGKITANEAFSKAGAVKIAKLYKGVENTKEEIINNYFNDENCRLAVDSLILSVSMEINSLLPLLDKNKRRVVLAGSIGTLRNPIDIPKRIKEFVEAKIFVLYGESGAIGGALIAEDILKGKRDILGIEVEFK</sequence>
<accession>Q58765</accession>
<proteinExistence type="inferred from homology"/>
<dbReference type="EMBL" id="L77117">
    <property type="protein sequence ID" value="AAB99387.1"/>
    <property type="molecule type" value="Genomic_DNA"/>
</dbReference>
<dbReference type="PIR" id="A64471">
    <property type="entry name" value="A64471"/>
</dbReference>
<dbReference type="RefSeq" id="WP_010870887.1">
    <property type="nucleotide sequence ID" value="NC_000909.1"/>
</dbReference>
<dbReference type="SMR" id="Q58765"/>
<dbReference type="FunCoup" id="Q58765">
    <property type="interactions" value="1"/>
</dbReference>
<dbReference type="STRING" id="243232.MJ_1370"/>
<dbReference type="PaxDb" id="243232-MJ_1370"/>
<dbReference type="EnsemblBacteria" id="AAB99387">
    <property type="protein sequence ID" value="AAB99387"/>
    <property type="gene ID" value="MJ_1370"/>
</dbReference>
<dbReference type="GeneID" id="1452273"/>
<dbReference type="KEGG" id="mja:MJ_1370"/>
<dbReference type="eggNOG" id="arCOG04885">
    <property type="taxonomic scope" value="Archaea"/>
</dbReference>
<dbReference type="HOGENOM" id="CLU_846254_0_0_2"/>
<dbReference type="InParanoid" id="Q58765"/>
<dbReference type="OrthoDB" id="235676at2157"/>
<dbReference type="PhylomeDB" id="Q58765"/>
<dbReference type="Proteomes" id="UP000000805">
    <property type="component" value="Chromosome"/>
</dbReference>
<dbReference type="HAMAP" id="MF_01087">
    <property type="entry name" value="UPF0285"/>
    <property type="match status" value="1"/>
</dbReference>
<dbReference type="InterPro" id="IPR043129">
    <property type="entry name" value="ATPase_NBD"/>
</dbReference>
<dbReference type="InterPro" id="IPR016735">
    <property type="entry name" value="Methan_mark_12"/>
</dbReference>
<dbReference type="NCBIfam" id="TIGR03281">
    <property type="entry name" value="methan_mark_12"/>
    <property type="match status" value="1"/>
</dbReference>
<dbReference type="PIRSF" id="PIRSF018783">
    <property type="entry name" value="UCP018783"/>
    <property type="match status" value="1"/>
</dbReference>
<dbReference type="SUPFAM" id="SSF53067">
    <property type="entry name" value="Actin-like ATPase domain"/>
    <property type="match status" value="1"/>
</dbReference>
<feature type="chain" id="PRO_0000151262" description="UPF0285 protein MJ1370">
    <location>
        <begin position="1"/>
        <end position="328"/>
    </location>
</feature>
<reference key="1">
    <citation type="journal article" date="1996" name="Science">
        <title>Complete genome sequence of the methanogenic archaeon, Methanococcus jannaschii.</title>
        <authorList>
            <person name="Bult C.J."/>
            <person name="White O."/>
            <person name="Olsen G.J."/>
            <person name="Zhou L."/>
            <person name="Fleischmann R.D."/>
            <person name="Sutton G.G."/>
            <person name="Blake J.A."/>
            <person name="FitzGerald L.M."/>
            <person name="Clayton R.A."/>
            <person name="Gocayne J.D."/>
            <person name="Kerlavage A.R."/>
            <person name="Dougherty B.A."/>
            <person name="Tomb J.-F."/>
            <person name="Adams M.D."/>
            <person name="Reich C.I."/>
            <person name="Overbeek R."/>
            <person name="Kirkness E.F."/>
            <person name="Weinstock K.G."/>
            <person name="Merrick J.M."/>
            <person name="Glodek A."/>
            <person name="Scott J.L."/>
            <person name="Geoghagen N.S.M."/>
            <person name="Weidman J.F."/>
            <person name="Fuhrmann J.L."/>
            <person name="Nguyen D."/>
            <person name="Utterback T.R."/>
            <person name="Kelley J.M."/>
            <person name="Peterson J.D."/>
            <person name="Sadow P.W."/>
            <person name="Hanna M.C."/>
            <person name="Cotton M.D."/>
            <person name="Roberts K.M."/>
            <person name="Hurst M.A."/>
            <person name="Kaine B.P."/>
            <person name="Borodovsky M."/>
            <person name="Klenk H.-P."/>
            <person name="Fraser C.M."/>
            <person name="Smith H.O."/>
            <person name="Woese C.R."/>
            <person name="Venter J.C."/>
        </authorList>
    </citation>
    <scope>NUCLEOTIDE SEQUENCE [LARGE SCALE GENOMIC DNA]</scope>
    <source>
        <strain>ATCC 43067 / DSM 2661 / JAL-1 / JCM 10045 / NBRC 100440</strain>
    </source>
</reference>
<evidence type="ECO:0000255" key="1">
    <source>
        <dbReference type="HAMAP-Rule" id="MF_01087"/>
    </source>
</evidence>